<protein>
    <recommendedName>
        <fullName evidence="1">D-ribose pyranase</fullName>
        <ecNumber evidence="1">5.4.99.62</ecNumber>
    </recommendedName>
</protein>
<reference key="1">
    <citation type="journal article" date="2006" name="Proc. Natl. Acad. Sci. U.S.A.">
        <title>Identification of genes subject to positive selection in uropathogenic strains of Escherichia coli: a comparative genomics approach.</title>
        <authorList>
            <person name="Chen S.L."/>
            <person name="Hung C.-S."/>
            <person name="Xu J."/>
            <person name="Reigstad C.S."/>
            <person name="Magrini V."/>
            <person name="Sabo A."/>
            <person name="Blasiar D."/>
            <person name="Bieri T."/>
            <person name="Meyer R.R."/>
            <person name="Ozersky P."/>
            <person name="Armstrong J.R."/>
            <person name="Fulton R.S."/>
            <person name="Latreille J.P."/>
            <person name="Spieth J."/>
            <person name="Hooton T.M."/>
            <person name="Mardis E.R."/>
            <person name="Hultgren S.J."/>
            <person name="Gordon J.I."/>
        </authorList>
    </citation>
    <scope>NUCLEOTIDE SEQUENCE [LARGE SCALE GENOMIC DNA]</scope>
    <source>
        <strain>UTI89 / UPEC</strain>
    </source>
</reference>
<comment type="function">
    <text evidence="1">Catalyzes the interconversion of beta-pyran and beta-furan forms of D-ribose.</text>
</comment>
<comment type="catalytic activity">
    <reaction evidence="1">
        <text>beta-D-ribopyranose = beta-D-ribofuranose</text>
        <dbReference type="Rhea" id="RHEA:25432"/>
        <dbReference type="ChEBI" id="CHEBI:27476"/>
        <dbReference type="ChEBI" id="CHEBI:47002"/>
        <dbReference type="EC" id="5.4.99.62"/>
    </reaction>
</comment>
<comment type="pathway">
    <text evidence="1">Carbohydrate metabolism; D-ribose degradation; D-ribose 5-phosphate from beta-D-ribopyranose: step 1/2.</text>
</comment>
<comment type="subunit">
    <text evidence="1">Homodecamer.</text>
</comment>
<comment type="subcellular location">
    <subcellularLocation>
        <location evidence="1">Cytoplasm</location>
    </subcellularLocation>
</comment>
<comment type="similarity">
    <text evidence="1">Belongs to the RbsD / FucU family. RbsD subfamily.</text>
</comment>
<comment type="sequence caution" evidence="2">
    <conflict type="erroneous initiation">
        <sequence resource="EMBL-CDS" id="ABE09730"/>
    </conflict>
</comment>
<evidence type="ECO:0000255" key="1">
    <source>
        <dbReference type="HAMAP-Rule" id="MF_01661"/>
    </source>
</evidence>
<evidence type="ECO:0000305" key="2"/>
<organism>
    <name type="scientific">Escherichia coli (strain UTI89 / UPEC)</name>
    <dbReference type="NCBI Taxonomy" id="364106"/>
    <lineage>
        <taxon>Bacteria</taxon>
        <taxon>Pseudomonadati</taxon>
        <taxon>Pseudomonadota</taxon>
        <taxon>Gammaproteobacteria</taxon>
        <taxon>Enterobacterales</taxon>
        <taxon>Enterobacteriaceae</taxon>
        <taxon>Escherichia</taxon>
    </lineage>
</organism>
<proteinExistence type="inferred from homology"/>
<dbReference type="EC" id="5.4.99.62" evidence="1"/>
<dbReference type="EMBL" id="CP000243">
    <property type="protein sequence ID" value="ABE09730.1"/>
    <property type="status" value="ALT_INIT"/>
    <property type="molecule type" value="Genomic_DNA"/>
</dbReference>
<dbReference type="RefSeq" id="WP_001350412.1">
    <property type="nucleotide sequence ID" value="NZ_CP064825.1"/>
</dbReference>
<dbReference type="SMR" id="Q1R4I4"/>
<dbReference type="KEGG" id="eci:UTI89_C4303"/>
<dbReference type="HOGENOM" id="CLU_135498_0_0_6"/>
<dbReference type="UniPathway" id="UPA00916">
    <property type="reaction ID" value="UER00888"/>
</dbReference>
<dbReference type="Proteomes" id="UP000001952">
    <property type="component" value="Chromosome"/>
</dbReference>
<dbReference type="GO" id="GO:0005829">
    <property type="term" value="C:cytosol"/>
    <property type="evidence" value="ECO:0007669"/>
    <property type="project" value="TreeGrafter"/>
</dbReference>
<dbReference type="GO" id="GO:0062193">
    <property type="term" value="F:D-ribose pyranase activity"/>
    <property type="evidence" value="ECO:0007669"/>
    <property type="project" value="UniProtKB-EC"/>
</dbReference>
<dbReference type="GO" id="GO:0016872">
    <property type="term" value="F:intramolecular lyase activity"/>
    <property type="evidence" value="ECO:0007669"/>
    <property type="project" value="UniProtKB-UniRule"/>
</dbReference>
<dbReference type="GO" id="GO:0048029">
    <property type="term" value="F:monosaccharide binding"/>
    <property type="evidence" value="ECO:0007669"/>
    <property type="project" value="InterPro"/>
</dbReference>
<dbReference type="GO" id="GO:0019303">
    <property type="term" value="P:D-ribose catabolic process"/>
    <property type="evidence" value="ECO:0007669"/>
    <property type="project" value="UniProtKB-UniRule"/>
</dbReference>
<dbReference type="FunFam" id="3.40.1650.10:FF:000002">
    <property type="entry name" value="D-ribose pyranase"/>
    <property type="match status" value="1"/>
</dbReference>
<dbReference type="Gene3D" id="3.40.1650.10">
    <property type="entry name" value="RbsD-like domain"/>
    <property type="match status" value="1"/>
</dbReference>
<dbReference type="HAMAP" id="MF_01661">
    <property type="entry name" value="D_rib_pyranase"/>
    <property type="match status" value="1"/>
</dbReference>
<dbReference type="InterPro" id="IPR023064">
    <property type="entry name" value="D-ribose_pyranase"/>
</dbReference>
<dbReference type="InterPro" id="IPR023750">
    <property type="entry name" value="RbsD-like_sf"/>
</dbReference>
<dbReference type="InterPro" id="IPR007721">
    <property type="entry name" value="RbsD_FucU"/>
</dbReference>
<dbReference type="NCBIfam" id="NF008761">
    <property type="entry name" value="PRK11797.1"/>
    <property type="match status" value="1"/>
</dbReference>
<dbReference type="PANTHER" id="PTHR37831">
    <property type="entry name" value="D-RIBOSE PYRANASE"/>
    <property type="match status" value="1"/>
</dbReference>
<dbReference type="PANTHER" id="PTHR37831:SF1">
    <property type="entry name" value="D-RIBOSE PYRANASE"/>
    <property type="match status" value="1"/>
</dbReference>
<dbReference type="Pfam" id="PF05025">
    <property type="entry name" value="RbsD_FucU"/>
    <property type="match status" value="1"/>
</dbReference>
<dbReference type="SUPFAM" id="SSF102546">
    <property type="entry name" value="RbsD-like"/>
    <property type="match status" value="1"/>
</dbReference>
<keyword id="KW-0119">Carbohydrate metabolism</keyword>
<keyword id="KW-0963">Cytoplasm</keyword>
<keyword id="KW-0413">Isomerase</keyword>
<sequence>MKKGTVLNSDISSVISRLGHTDTLVVCDAGLPIPKSTTRIDMALTQGVPSFMQVLGVVTNEMQVEAVIIAEEIKQHNPQLHETLLTHLEQLQKHQGNTIEIRYTTHEQFKQQTAGSQAVIRSGECSPYANIILCAGVTF</sequence>
<feature type="chain" id="PRO_0000346199" description="D-ribose pyranase">
    <location>
        <begin position="1"/>
        <end position="139"/>
    </location>
</feature>
<feature type="active site" description="Proton donor" evidence="1">
    <location>
        <position position="20"/>
    </location>
</feature>
<feature type="binding site" evidence="1">
    <location>
        <position position="28"/>
    </location>
    <ligand>
        <name>substrate</name>
    </ligand>
</feature>
<feature type="binding site" evidence="1">
    <location>
        <position position="106"/>
    </location>
    <ligand>
        <name>substrate</name>
    </ligand>
</feature>
<feature type="binding site" evidence="1">
    <location>
        <begin position="128"/>
        <end position="130"/>
    </location>
    <ligand>
        <name>substrate</name>
    </ligand>
</feature>
<accession>Q1R4I4</accession>
<name>RBSD_ECOUT</name>
<gene>
    <name evidence="1" type="primary">rbsD</name>
    <name type="ordered locus">UTI89_C4303</name>
</gene>